<name>RPOB_FRATF</name>
<comment type="function">
    <text evidence="1">DNA-dependent RNA polymerase catalyzes the transcription of DNA into RNA using the four ribonucleoside triphosphates as substrates.</text>
</comment>
<comment type="catalytic activity">
    <reaction evidence="1">
        <text>RNA(n) + a ribonucleoside 5'-triphosphate = RNA(n+1) + diphosphate</text>
        <dbReference type="Rhea" id="RHEA:21248"/>
        <dbReference type="Rhea" id="RHEA-COMP:14527"/>
        <dbReference type="Rhea" id="RHEA-COMP:17342"/>
        <dbReference type="ChEBI" id="CHEBI:33019"/>
        <dbReference type="ChEBI" id="CHEBI:61557"/>
        <dbReference type="ChEBI" id="CHEBI:140395"/>
        <dbReference type="EC" id="2.7.7.6"/>
    </reaction>
</comment>
<comment type="subunit">
    <text evidence="1">The RNAP catalytic core consists of 2 alpha, 1 beta, 1 beta' and 1 omega subunit. When a sigma factor is associated with the core the holoenzyme is formed, which can initiate transcription.</text>
</comment>
<comment type="similarity">
    <text evidence="1">Belongs to the RNA polymerase beta chain family.</text>
</comment>
<comment type="sequence caution" evidence="2">
    <conflict type="erroneous initiation">
        <sequence resource="EMBL-CDS" id="ABU62323"/>
    </conflict>
</comment>
<reference key="1">
    <citation type="journal article" date="2009" name="PLoS ONE">
        <title>Complete genome sequence of Francisella tularensis subspecies holarctica FTNF002-00.</title>
        <authorList>
            <person name="Barabote R.D."/>
            <person name="Xie G."/>
            <person name="Brettin T.S."/>
            <person name="Hinrichs S.H."/>
            <person name="Fey P.D."/>
            <person name="Jay J.J."/>
            <person name="Engle J.L."/>
            <person name="Godbole S.D."/>
            <person name="Noronha J.M."/>
            <person name="Scheuermann R.H."/>
            <person name="Zhou L.W."/>
            <person name="Lion C."/>
            <person name="Dempsey M.P."/>
        </authorList>
    </citation>
    <scope>NUCLEOTIDE SEQUENCE [LARGE SCALE GENOMIC DNA]</scope>
    <source>
        <strain>FTNF002-00 / FTA</strain>
    </source>
</reference>
<organism>
    <name type="scientific">Francisella tularensis subsp. holarctica (strain FTNF002-00 / FTA)</name>
    <dbReference type="NCBI Taxonomy" id="458234"/>
    <lineage>
        <taxon>Bacteria</taxon>
        <taxon>Pseudomonadati</taxon>
        <taxon>Pseudomonadota</taxon>
        <taxon>Gammaproteobacteria</taxon>
        <taxon>Thiotrichales</taxon>
        <taxon>Francisellaceae</taxon>
        <taxon>Francisella</taxon>
    </lineage>
</organism>
<feature type="chain" id="PRO_0000329178" description="DNA-directed RNA polymerase subunit beta">
    <location>
        <begin position="1"/>
        <end position="1358"/>
    </location>
</feature>
<gene>
    <name evidence="1" type="primary">rpoB</name>
    <name type="ordered locus">FTA_1848</name>
</gene>
<sequence>MSYSYAEKKRIRKEFGVLPHILDVPYLLSIQTESYKKFLTVDAAKGRLHSGLEIVLKQSFPVESKNGQYELHYVDYQIGEPTFDETECQVRGATYDAPLNVKLRLVVYNKDALPNEKIVEDIREEYVYMGDIPLMTTNGTFIINGTERVVVSQLHRSPGVFFSKDDSEEGAFSARIIPYRGSWLDFEFDSKGIIWARIDRKRKFCATVILKALGYTQEQILENFSESKTITFNSKGFALRLDNLSNMKGELLKFDIVDAQDNVIVKKNKKLTSRDVKKIKDAGVDSVAIDFDLVSTLRVAKDIVNEATGEVIAYANDDVTESLLESCVEVGMLELEVIDFITTERGRYISDTLKYDLTRNTDEALVEIYKVLRPGDPPAAASVKALFEGLFFIESRYSLSDIGRMKLNARLGSDKVSKDIYTLENSDIVGVIEELINIRDGKGKVDDIDHLGNRRVRSVGEMVENQFRIGLYRVEKGIRESMSLVHKDKLMPKDIVNSKPITAAIKEFFTSGALSQFMDQDNPLSEVTHKRRISALGPGGLSRDRAGFEVRDVHATHYGRLCPIETPEGPNIGLINSLASYARVNDYGFLEAPYRKVVDGKVTDEIEYLSAIDEDNYVIAQASTKLDENNHFVEDIIQCRSGGEAIFTESSRVQYMDVSAKQMVSAAAALIPFLEHDDANRVLMGANMQRQAVPTLKSEKPLVGTGMEKIVARDSGNCIIARNVGEVAEVDSNRIVIKVDTEKSQTSNLVDIYSLTKFKRSNKNTCINQRPIVNVGDKVEAGDILADGFATDFGELSLGHNLMVAFMPWNGYNFEDSILLSERIVKDDKYTSIHIEEFTCVARDTKLGPEEITADIPNVSESSLAKLDESGIVHIGANVEAGDILVAKITPKAEQQLTPEERLLRAIFNEKASNVVDSSLRMPSGTSGTVISVQVFENDKGGKSKRALKIEKELIDKARKDFDEEFAVIESVVKSSIEQEVVGAKIQKAKGLKKGAILTKEFLATLPLSKWLEISFEDEKLEEKVQNAREYYEEAKIAIDAKFEAKKKSITQSNELSPGVLKTVKVFVAIKKRIQPGDKMAGRHGNKGVVSRVLPVEDMPYMEDGTPVDVCLNPLGIPSRMNIGQILEAHLGLASYGLGKKIEKTLEKTRKAAELRKTLEEVYNSVGDKKVNLEALNDEEILTLCDNLKGGVPIATPVFDGAKEEDIKSLLKIGGFATNGQMKLFDGRTGKPFDRHVTVGYMYMLKLDHLVDDKMHARSTGSYSLVTQQPLGGKAQFGGQRFGEMEVWALQAYGAAYTLREMLTVKSDDIAGRSKMYKNIVDGKLTMNVDVPESFNVLRNEVRALGIDMDFDYSSEEE</sequence>
<protein>
    <recommendedName>
        <fullName evidence="1">DNA-directed RNA polymerase subunit beta</fullName>
        <shortName evidence="1">RNAP subunit beta</shortName>
        <ecNumber evidence="1">2.7.7.6</ecNumber>
    </recommendedName>
    <alternativeName>
        <fullName evidence="1">RNA polymerase subunit beta</fullName>
    </alternativeName>
    <alternativeName>
        <fullName evidence="1">Transcriptase subunit beta</fullName>
    </alternativeName>
</protein>
<keyword id="KW-0240">DNA-directed RNA polymerase</keyword>
<keyword id="KW-0548">Nucleotidyltransferase</keyword>
<keyword id="KW-0804">Transcription</keyword>
<keyword id="KW-0808">Transferase</keyword>
<evidence type="ECO:0000255" key="1">
    <source>
        <dbReference type="HAMAP-Rule" id="MF_01321"/>
    </source>
</evidence>
<evidence type="ECO:0000305" key="2"/>
<accession>A7NEC0</accession>
<proteinExistence type="inferred from homology"/>
<dbReference type="EC" id="2.7.7.6" evidence="1"/>
<dbReference type="EMBL" id="CP000803">
    <property type="protein sequence ID" value="ABU62323.1"/>
    <property type="status" value="ALT_INIT"/>
    <property type="molecule type" value="Genomic_DNA"/>
</dbReference>
<dbReference type="RefSeq" id="WP_010032708.1">
    <property type="nucleotide sequence ID" value="NC_009749.1"/>
</dbReference>
<dbReference type="SMR" id="A7NEC0"/>
<dbReference type="KEGG" id="fta:FTA_1848"/>
<dbReference type="HOGENOM" id="CLU_000524_4_3_6"/>
<dbReference type="GO" id="GO:0000428">
    <property type="term" value="C:DNA-directed RNA polymerase complex"/>
    <property type="evidence" value="ECO:0007669"/>
    <property type="project" value="UniProtKB-KW"/>
</dbReference>
<dbReference type="GO" id="GO:0003677">
    <property type="term" value="F:DNA binding"/>
    <property type="evidence" value="ECO:0007669"/>
    <property type="project" value="UniProtKB-UniRule"/>
</dbReference>
<dbReference type="GO" id="GO:0003899">
    <property type="term" value="F:DNA-directed RNA polymerase activity"/>
    <property type="evidence" value="ECO:0007669"/>
    <property type="project" value="UniProtKB-UniRule"/>
</dbReference>
<dbReference type="GO" id="GO:0032549">
    <property type="term" value="F:ribonucleoside binding"/>
    <property type="evidence" value="ECO:0007669"/>
    <property type="project" value="InterPro"/>
</dbReference>
<dbReference type="GO" id="GO:0006351">
    <property type="term" value="P:DNA-templated transcription"/>
    <property type="evidence" value="ECO:0007669"/>
    <property type="project" value="UniProtKB-UniRule"/>
</dbReference>
<dbReference type="CDD" id="cd00653">
    <property type="entry name" value="RNA_pol_B_RPB2"/>
    <property type="match status" value="1"/>
</dbReference>
<dbReference type="FunFam" id="3.90.1800.10:FF:000001">
    <property type="entry name" value="DNA-directed RNA polymerase subunit beta"/>
    <property type="match status" value="1"/>
</dbReference>
<dbReference type="Gene3D" id="2.40.50.100">
    <property type="match status" value="1"/>
</dbReference>
<dbReference type="Gene3D" id="2.40.50.150">
    <property type="match status" value="1"/>
</dbReference>
<dbReference type="Gene3D" id="3.90.1100.10">
    <property type="match status" value="2"/>
</dbReference>
<dbReference type="Gene3D" id="2.30.150.10">
    <property type="entry name" value="DNA-directed RNA polymerase, beta subunit, external 1 domain"/>
    <property type="match status" value="1"/>
</dbReference>
<dbReference type="Gene3D" id="2.40.270.10">
    <property type="entry name" value="DNA-directed RNA polymerase, subunit 2, domain 6"/>
    <property type="match status" value="2"/>
</dbReference>
<dbReference type="Gene3D" id="3.90.1800.10">
    <property type="entry name" value="RNA polymerase alpha subunit dimerisation domain"/>
    <property type="match status" value="1"/>
</dbReference>
<dbReference type="Gene3D" id="3.90.1110.10">
    <property type="entry name" value="RNA polymerase Rpb2, domain 2"/>
    <property type="match status" value="2"/>
</dbReference>
<dbReference type="HAMAP" id="MF_01321">
    <property type="entry name" value="RNApol_bact_RpoB"/>
    <property type="match status" value="1"/>
</dbReference>
<dbReference type="InterPro" id="IPR042107">
    <property type="entry name" value="DNA-dir_RNA_pol_bsu_ext_1_sf"/>
</dbReference>
<dbReference type="InterPro" id="IPR019462">
    <property type="entry name" value="DNA-dir_RNA_pol_bsu_external_1"/>
</dbReference>
<dbReference type="InterPro" id="IPR015712">
    <property type="entry name" value="DNA-dir_RNA_pol_su2"/>
</dbReference>
<dbReference type="InterPro" id="IPR007120">
    <property type="entry name" value="DNA-dir_RNAP_su2_dom"/>
</dbReference>
<dbReference type="InterPro" id="IPR037033">
    <property type="entry name" value="DNA-dir_RNAP_su2_hyb_sf"/>
</dbReference>
<dbReference type="InterPro" id="IPR010243">
    <property type="entry name" value="RNA_pol_bsu_bac"/>
</dbReference>
<dbReference type="InterPro" id="IPR007121">
    <property type="entry name" value="RNA_pol_bsu_CS"/>
</dbReference>
<dbReference type="InterPro" id="IPR007644">
    <property type="entry name" value="RNA_pol_bsu_protrusion"/>
</dbReference>
<dbReference type="InterPro" id="IPR007642">
    <property type="entry name" value="RNA_pol_Rpb2_2"/>
</dbReference>
<dbReference type="InterPro" id="IPR037034">
    <property type="entry name" value="RNA_pol_Rpb2_2_sf"/>
</dbReference>
<dbReference type="InterPro" id="IPR007645">
    <property type="entry name" value="RNA_pol_Rpb2_3"/>
</dbReference>
<dbReference type="InterPro" id="IPR007641">
    <property type="entry name" value="RNA_pol_Rpb2_7"/>
</dbReference>
<dbReference type="InterPro" id="IPR014724">
    <property type="entry name" value="RNA_pol_RPB2_OB-fold"/>
</dbReference>
<dbReference type="NCBIfam" id="NF001616">
    <property type="entry name" value="PRK00405.1"/>
    <property type="match status" value="1"/>
</dbReference>
<dbReference type="NCBIfam" id="TIGR02013">
    <property type="entry name" value="rpoB"/>
    <property type="match status" value="1"/>
</dbReference>
<dbReference type="PANTHER" id="PTHR20856">
    <property type="entry name" value="DNA-DIRECTED RNA POLYMERASE I SUBUNIT 2"/>
    <property type="match status" value="1"/>
</dbReference>
<dbReference type="Pfam" id="PF04563">
    <property type="entry name" value="RNA_pol_Rpb2_1"/>
    <property type="match status" value="1"/>
</dbReference>
<dbReference type="Pfam" id="PF04561">
    <property type="entry name" value="RNA_pol_Rpb2_2"/>
    <property type="match status" value="2"/>
</dbReference>
<dbReference type="Pfam" id="PF04565">
    <property type="entry name" value="RNA_pol_Rpb2_3"/>
    <property type="match status" value="1"/>
</dbReference>
<dbReference type="Pfam" id="PF10385">
    <property type="entry name" value="RNA_pol_Rpb2_45"/>
    <property type="match status" value="1"/>
</dbReference>
<dbReference type="Pfam" id="PF00562">
    <property type="entry name" value="RNA_pol_Rpb2_6"/>
    <property type="match status" value="1"/>
</dbReference>
<dbReference type="Pfam" id="PF04560">
    <property type="entry name" value="RNA_pol_Rpb2_7"/>
    <property type="match status" value="1"/>
</dbReference>
<dbReference type="SUPFAM" id="SSF64484">
    <property type="entry name" value="beta and beta-prime subunits of DNA dependent RNA-polymerase"/>
    <property type="match status" value="1"/>
</dbReference>
<dbReference type="PROSITE" id="PS01166">
    <property type="entry name" value="RNA_POL_BETA"/>
    <property type="match status" value="1"/>
</dbReference>